<organism>
    <name type="scientific">Pectobacterium carotovorum subsp. carotovorum (strain PC1)</name>
    <dbReference type="NCBI Taxonomy" id="561230"/>
    <lineage>
        <taxon>Bacteria</taxon>
        <taxon>Pseudomonadati</taxon>
        <taxon>Pseudomonadota</taxon>
        <taxon>Gammaproteobacteria</taxon>
        <taxon>Enterobacterales</taxon>
        <taxon>Pectobacteriaceae</taxon>
        <taxon>Pectobacterium</taxon>
    </lineage>
</organism>
<evidence type="ECO:0000255" key="1">
    <source>
        <dbReference type="HAMAP-Rule" id="MF_00735"/>
    </source>
</evidence>
<dbReference type="EC" id="2.1.1.-" evidence="1"/>
<dbReference type="EMBL" id="CP001657">
    <property type="protein sequence ID" value="ACT11299.1"/>
    <property type="molecule type" value="Genomic_DNA"/>
</dbReference>
<dbReference type="RefSeq" id="WP_012772964.1">
    <property type="nucleotide sequence ID" value="NC_012917.1"/>
</dbReference>
<dbReference type="SMR" id="C6DIJ9"/>
<dbReference type="STRING" id="561230.PC1_0239"/>
<dbReference type="KEGG" id="pct:PC1_0239"/>
<dbReference type="eggNOG" id="COG2264">
    <property type="taxonomic scope" value="Bacteria"/>
</dbReference>
<dbReference type="HOGENOM" id="CLU_049382_4_1_6"/>
<dbReference type="OrthoDB" id="9785995at2"/>
<dbReference type="Proteomes" id="UP000002736">
    <property type="component" value="Chromosome"/>
</dbReference>
<dbReference type="GO" id="GO:0005829">
    <property type="term" value="C:cytosol"/>
    <property type="evidence" value="ECO:0007669"/>
    <property type="project" value="TreeGrafter"/>
</dbReference>
<dbReference type="GO" id="GO:0016279">
    <property type="term" value="F:protein-lysine N-methyltransferase activity"/>
    <property type="evidence" value="ECO:0007669"/>
    <property type="project" value="TreeGrafter"/>
</dbReference>
<dbReference type="GO" id="GO:0032259">
    <property type="term" value="P:methylation"/>
    <property type="evidence" value="ECO:0007669"/>
    <property type="project" value="UniProtKB-KW"/>
</dbReference>
<dbReference type="CDD" id="cd02440">
    <property type="entry name" value="AdoMet_MTases"/>
    <property type="match status" value="1"/>
</dbReference>
<dbReference type="Gene3D" id="3.40.50.150">
    <property type="entry name" value="Vaccinia Virus protein VP39"/>
    <property type="match status" value="1"/>
</dbReference>
<dbReference type="HAMAP" id="MF_00735">
    <property type="entry name" value="Methyltr_PrmA"/>
    <property type="match status" value="1"/>
</dbReference>
<dbReference type="InterPro" id="IPR050078">
    <property type="entry name" value="Ribosomal_L11_MeTrfase_PrmA"/>
</dbReference>
<dbReference type="InterPro" id="IPR004498">
    <property type="entry name" value="Ribosomal_PrmA_MeTrfase"/>
</dbReference>
<dbReference type="InterPro" id="IPR029063">
    <property type="entry name" value="SAM-dependent_MTases_sf"/>
</dbReference>
<dbReference type="NCBIfam" id="TIGR00406">
    <property type="entry name" value="prmA"/>
    <property type="match status" value="1"/>
</dbReference>
<dbReference type="PANTHER" id="PTHR43648">
    <property type="entry name" value="ELECTRON TRANSFER FLAVOPROTEIN BETA SUBUNIT LYSINE METHYLTRANSFERASE"/>
    <property type="match status" value="1"/>
</dbReference>
<dbReference type="PANTHER" id="PTHR43648:SF1">
    <property type="entry name" value="ELECTRON TRANSFER FLAVOPROTEIN BETA SUBUNIT LYSINE METHYLTRANSFERASE"/>
    <property type="match status" value="1"/>
</dbReference>
<dbReference type="Pfam" id="PF06325">
    <property type="entry name" value="PrmA"/>
    <property type="match status" value="1"/>
</dbReference>
<dbReference type="PIRSF" id="PIRSF000401">
    <property type="entry name" value="RPL11_MTase"/>
    <property type="match status" value="1"/>
</dbReference>
<dbReference type="SUPFAM" id="SSF53335">
    <property type="entry name" value="S-adenosyl-L-methionine-dependent methyltransferases"/>
    <property type="match status" value="1"/>
</dbReference>
<feature type="chain" id="PRO_1000212754" description="Ribosomal protein L11 methyltransferase">
    <location>
        <begin position="1"/>
        <end position="295"/>
    </location>
</feature>
<feature type="binding site" evidence="1">
    <location>
        <position position="145"/>
    </location>
    <ligand>
        <name>S-adenosyl-L-methionine</name>
        <dbReference type="ChEBI" id="CHEBI:59789"/>
    </ligand>
</feature>
<feature type="binding site" evidence="1">
    <location>
        <position position="166"/>
    </location>
    <ligand>
        <name>S-adenosyl-L-methionine</name>
        <dbReference type="ChEBI" id="CHEBI:59789"/>
    </ligand>
</feature>
<feature type="binding site" evidence="1">
    <location>
        <position position="188"/>
    </location>
    <ligand>
        <name>S-adenosyl-L-methionine</name>
        <dbReference type="ChEBI" id="CHEBI:59789"/>
    </ligand>
</feature>
<feature type="binding site" evidence="1">
    <location>
        <position position="230"/>
    </location>
    <ligand>
        <name>S-adenosyl-L-methionine</name>
        <dbReference type="ChEBI" id="CHEBI:59789"/>
    </ligand>
</feature>
<protein>
    <recommendedName>
        <fullName evidence="1">Ribosomal protein L11 methyltransferase</fullName>
        <shortName evidence="1">L11 Mtase</shortName>
        <ecNumber evidence="1">2.1.1.-</ecNumber>
    </recommendedName>
</protein>
<sequence>MPWIQLKINTSGNVAEQLGDAMIESGAVSVTFQDTHDTPVFEPLPGETRLWGDTDAIALYDAETDMNDVIAMLEQEPLLGVGFKHKIEQLEDKDWEREWMDNFHPMQFGKRLWICPSWRDIPDPTAVNVMLDPGLAFGTGTHPTTALCLQWLDGLDLEGKTIIDFGCGSGILAIAALKLGAARAIGIDIDPQAIQASRDNAQRNGVSERLELYLPKDQPADLSADVVVANILAGPLRELAPLISDLPKAGGHLGLSGVLATQADGVAEAYADKFTLDPVAEREEWCRITGQRRAS</sequence>
<accession>C6DIJ9</accession>
<reference key="1">
    <citation type="submission" date="2009-07" db="EMBL/GenBank/DDBJ databases">
        <title>Complete sequence of Pectobacterium carotovorum subsp. carotovorum PC1.</title>
        <authorList>
            <consortium name="US DOE Joint Genome Institute"/>
            <person name="Lucas S."/>
            <person name="Copeland A."/>
            <person name="Lapidus A."/>
            <person name="Glavina del Rio T."/>
            <person name="Tice H."/>
            <person name="Bruce D."/>
            <person name="Goodwin L."/>
            <person name="Pitluck S."/>
            <person name="Munk A.C."/>
            <person name="Brettin T."/>
            <person name="Detter J.C."/>
            <person name="Han C."/>
            <person name="Tapia R."/>
            <person name="Larimer F."/>
            <person name="Land M."/>
            <person name="Hauser L."/>
            <person name="Kyrpides N."/>
            <person name="Mikhailova N."/>
            <person name="Balakrishnan V."/>
            <person name="Glasner J."/>
            <person name="Perna N.T."/>
        </authorList>
    </citation>
    <scope>NUCLEOTIDE SEQUENCE [LARGE SCALE GENOMIC DNA]</scope>
    <source>
        <strain>PC1</strain>
    </source>
</reference>
<comment type="function">
    <text evidence="1">Methylates ribosomal protein L11.</text>
</comment>
<comment type="catalytic activity">
    <reaction evidence="1">
        <text>L-lysyl-[protein] + 3 S-adenosyl-L-methionine = N(6),N(6),N(6)-trimethyl-L-lysyl-[protein] + 3 S-adenosyl-L-homocysteine + 3 H(+)</text>
        <dbReference type="Rhea" id="RHEA:54192"/>
        <dbReference type="Rhea" id="RHEA-COMP:9752"/>
        <dbReference type="Rhea" id="RHEA-COMP:13826"/>
        <dbReference type="ChEBI" id="CHEBI:15378"/>
        <dbReference type="ChEBI" id="CHEBI:29969"/>
        <dbReference type="ChEBI" id="CHEBI:57856"/>
        <dbReference type="ChEBI" id="CHEBI:59789"/>
        <dbReference type="ChEBI" id="CHEBI:61961"/>
    </reaction>
</comment>
<comment type="subcellular location">
    <subcellularLocation>
        <location evidence="1">Cytoplasm</location>
    </subcellularLocation>
</comment>
<comment type="similarity">
    <text evidence="1">Belongs to the methyltransferase superfamily. PrmA family.</text>
</comment>
<keyword id="KW-0963">Cytoplasm</keyword>
<keyword id="KW-0489">Methyltransferase</keyword>
<keyword id="KW-0949">S-adenosyl-L-methionine</keyword>
<keyword id="KW-0808">Transferase</keyword>
<proteinExistence type="inferred from homology"/>
<name>PRMA_PECCP</name>
<gene>
    <name evidence="1" type="primary">prmA</name>
    <name type="ordered locus">PC1_0239</name>
</gene>